<protein>
    <recommendedName>
        <fullName>Cellulose-complementing protein</fullName>
    </recommendedName>
</protein>
<gene>
    <name type="primary">ccpAX</name>
    <name type="synonym">ccp</name>
</gene>
<name>CCPA_KOMXY</name>
<evidence type="ECO:0000256" key="1">
    <source>
        <dbReference type="SAM" id="MobiDB-lite"/>
    </source>
</evidence>
<evidence type="ECO:0000305" key="2"/>
<proteinExistence type="predicted"/>
<sequence>MSASGSDEVAGGGQAGSPQDFQRVLRSFGVEGGQYSYRPFVDRSFDVTGVPEAVERHFDQAEHDTAVEEQVTPAPQIAVAPPPPPVVPDPPAIVTETAPPPPVVVSAPVTYEPPAAAVPAEPPVQEAPVQAAPVPPAPVPPIAEQAPPAAPDPASVPYANVAAAPVPPDPAPVTPAPQARVTGPNTRMVEPFSRPQVRTVQEGATPSRVPSRSMNAFPRTSASSISERPVDRGVADEWSPVPKARLSPRERPRPGDLSFFFQGMRDTRDEKKFFPVASTRSVRSNVSRMTSMTKTDTNSSQASRPGSPVASPDGSPTMAEVFMTLGGRATELLSPRPSLREALLRRRENEEES</sequence>
<accession>Q76KK0</accession>
<accession>P37697</accession>
<feature type="chain" id="PRO_0000409026" description="Cellulose-complementing protein">
    <location>
        <begin position="1"/>
        <end position="353"/>
    </location>
</feature>
<feature type="region of interest" description="Disordered" evidence="1">
    <location>
        <begin position="1"/>
        <end position="21"/>
    </location>
</feature>
<feature type="region of interest" description="Disordered" evidence="1">
    <location>
        <begin position="75"/>
        <end position="94"/>
    </location>
</feature>
<feature type="region of interest" description="Disordered" evidence="1">
    <location>
        <begin position="117"/>
        <end position="337"/>
    </location>
</feature>
<feature type="compositionally biased region" description="Pro residues" evidence="1">
    <location>
        <begin position="80"/>
        <end position="91"/>
    </location>
</feature>
<feature type="compositionally biased region" description="Low complexity" evidence="1">
    <location>
        <begin position="117"/>
        <end position="132"/>
    </location>
</feature>
<feature type="compositionally biased region" description="Low complexity" evidence="1">
    <location>
        <begin position="142"/>
        <end position="164"/>
    </location>
</feature>
<feature type="compositionally biased region" description="Pro residues" evidence="1">
    <location>
        <begin position="165"/>
        <end position="175"/>
    </location>
</feature>
<feature type="compositionally biased region" description="Polar residues" evidence="1">
    <location>
        <begin position="196"/>
        <end position="226"/>
    </location>
</feature>
<feature type="compositionally biased region" description="Polar residues" evidence="1">
    <location>
        <begin position="278"/>
        <end position="304"/>
    </location>
</feature>
<feature type="sequence conflict" description="In Ref. 2; X54676." evidence="2" ref="2">
    <original>R</original>
    <variation>Q</variation>
    <location>
        <position position="232"/>
    </location>
</feature>
<feature type="sequence conflict" description="In Ref. 2; X54676." evidence="2" ref="2">
    <original>ARLSPRE</original>
    <variation>HASAAG</variation>
    <location>
        <begin position="244"/>
        <end position="250"/>
    </location>
</feature>
<reference key="1">
    <citation type="submission" date="2002-08" db="EMBL/GenBank/DDBJ databases">
        <title>Cloning of cellulose synthesis related genes from Acetobacter xylinum ATCC 23769 and ATCC 53582: comparison of cellulose synthetic ability between ATCC 23769 and ATCC 53582.</title>
        <authorList>
            <person name="Kawano S."/>
            <person name="Tajima K."/>
            <person name="Uemori Y."/>
            <person name="Yamashita H."/>
            <person name="Erata T."/>
            <person name="Munekata M."/>
            <person name="Takai M."/>
        </authorList>
    </citation>
    <scope>NUCLEOTIDE SEQUENCE [GENOMIC DNA]</scope>
    <source>
        <strain>ATCC 53582 / NQ5</strain>
    </source>
</reference>
<reference key="2">
    <citation type="journal article" date="1991" name="Plant Mol. Biol.">
        <title>Identification of a new gene in an operon for cellulose biosynthesis in Acetobacter xylinum.</title>
        <authorList>
            <person name="Saxena I.M."/>
            <person name="Lin F.C."/>
            <person name="Brown R.M. Jr."/>
        </authorList>
    </citation>
    <scope>NUCLEOTIDE SEQUENCE [GENOMIC DNA] OF 232-353</scope>
    <source>
        <strain>ATCC 53582 / NQ5</strain>
    </source>
</reference>
<organism>
    <name type="scientific">Komagataeibacter xylinus</name>
    <name type="common">Gluconacetobacter xylinus</name>
    <dbReference type="NCBI Taxonomy" id="28448"/>
    <lineage>
        <taxon>Bacteria</taxon>
        <taxon>Pseudomonadati</taxon>
        <taxon>Pseudomonadota</taxon>
        <taxon>Alphaproteobacteria</taxon>
        <taxon>Acetobacterales</taxon>
        <taxon>Acetobacteraceae</taxon>
        <taxon>Komagataeibacter</taxon>
    </lineage>
</organism>
<dbReference type="EMBL" id="AB091058">
    <property type="protein sequence ID" value="BAC82541.1"/>
    <property type="molecule type" value="Genomic_DNA"/>
</dbReference>
<dbReference type="EMBL" id="X54676">
    <property type="status" value="NOT_ANNOTATED_CDS"/>
    <property type="molecule type" value="Genomic_DNA"/>
</dbReference>
<dbReference type="SMR" id="Q76KK0"/>
<dbReference type="InterPro" id="IPR031480">
    <property type="entry name" value="CcpAX"/>
</dbReference>
<dbReference type="Pfam" id="PF17040">
    <property type="entry name" value="CBP_CCPA"/>
    <property type="match status" value="1"/>
</dbReference>